<feature type="chain" id="PRO_0000229256" description="Ribosome maturation factor RimP">
    <location>
        <begin position="1"/>
        <end position="151"/>
    </location>
</feature>
<accession>Q3J9B4</accession>
<gene>
    <name evidence="1" type="primary">rimP</name>
    <name type="ordered locus">Noc_2122</name>
</gene>
<reference key="1">
    <citation type="journal article" date="2006" name="Appl. Environ. Microbiol.">
        <title>Complete genome sequence of the marine, chemolithoautotrophic, ammonia-oxidizing bacterium Nitrosococcus oceani ATCC 19707.</title>
        <authorList>
            <person name="Klotz M.G."/>
            <person name="Arp D.J."/>
            <person name="Chain P.S.G."/>
            <person name="El-Sheikh A.F."/>
            <person name="Hauser L.J."/>
            <person name="Hommes N.G."/>
            <person name="Larimer F.W."/>
            <person name="Malfatti S.A."/>
            <person name="Norton J.M."/>
            <person name="Poret-Peterson A.T."/>
            <person name="Vergez L.M."/>
            <person name="Ward B.B."/>
        </authorList>
    </citation>
    <scope>NUCLEOTIDE SEQUENCE [LARGE SCALE GENOMIC DNA]</scope>
    <source>
        <strain>ATCC 19707 / BCRC 17464 / JCM 30415 / NCIMB 11848 / C-107</strain>
    </source>
</reference>
<name>RIMP_NITOC</name>
<dbReference type="EMBL" id="CP000127">
    <property type="protein sequence ID" value="ABA58582.1"/>
    <property type="molecule type" value="Genomic_DNA"/>
</dbReference>
<dbReference type="RefSeq" id="WP_002811433.1">
    <property type="nucleotide sequence ID" value="NC_007484.1"/>
</dbReference>
<dbReference type="SMR" id="Q3J9B4"/>
<dbReference type="FunCoup" id="Q3J9B4">
    <property type="interactions" value="340"/>
</dbReference>
<dbReference type="STRING" id="323261.Noc_2122"/>
<dbReference type="KEGG" id="noc:Noc_2122"/>
<dbReference type="eggNOG" id="COG0779">
    <property type="taxonomic scope" value="Bacteria"/>
</dbReference>
<dbReference type="HOGENOM" id="CLU_070525_1_1_6"/>
<dbReference type="InParanoid" id="Q3J9B4"/>
<dbReference type="Proteomes" id="UP000006838">
    <property type="component" value="Chromosome"/>
</dbReference>
<dbReference type="GO" id="GO:0005829">
    <property type="term" value="C:cytosol"/>
    <property type="evidence" value="ECO:0007669"/>
    <property type="project" value="TreeGrafter"/>
</dbReference>
<dbReference type="GO" id="GO:0000028">
    <property type="term" value="P:ribosomal small subunit assembly"/>
    <property type="evidence" value="ECO:0007669"/>
    <property type="project" value="TreeGrafter"/>
</dbReference>
<dbReference type="GO" id="GO:0006412">
    <property type="term" value="P:translation"/>
    <property type="evidence" value="ECO:0007669"/>
    <property type="project" value="TreeGrafter"/>
</dbReference>
<dbReference type="CDD" id="cd01734">
    <property type="entry name" value="YlxS_C"/>
    <property type="match status" value="1"/>
</dbReference>
<dbReference type="FunFam" id="3.30.300.70:FF:000001">
    <property type="entry name" value="Ribosome maturation factor RimP"/>
    <property type="match status" value="1"/>
</dbReference>
<dbReference type="Gene3D" id="2.30.30.180">
    <property type="entry name" value="Ribosome maturation factor RimP, C-terminal domain"/>
    <property type="match status" value="1"/>
</dbReference>
<dbReference type="Gene3D" id="3.30.300.70">
    <property type="entry name" value="RimP-like superfamily, N-terminal"/>
    <property type="match status" value="1"/>
</dbReference>
<dbReference type="HAMAP" id="MF_01077">
    <property type="entry name" value="RimP"/>
    <property type="match status" value="1"/>
</dbReference>
<dbReference type="InterPro" id="IPR003728">
    <property type="entry name" value="Ribosome_maturation_RimP"/>
</dbReference>
<dbReference type="InterPro" id="IPR028998">
    <property type="entry name" value="RimP_C"/>
</dbReference>
<dbReference type="InterPro" id="IPR036847">
    <property type="entry name" value="RimP_C_sf"/>
</dbReference>
<dbReference type="InterPro" id="IPR028989">
    <property type="entry name" value="RimP_N"/>
</dbReference>
<dbReference type="InterPro" id="IPR035956">
    <property type="entry name" value="RimP_N_sf"/>
</dbReference>
<dbReference type="NCBIfam" id="NF000927">
    <property type="entry name" value="PRK00092.1-1"/>
    <property type="match status" value="1"/>
</dbReference>
<dbReference type="PANTHER" id="PTHR33867">
    <property type="entry name" value="RIBOSOME MATURATION FACTOR RIMP"/>
    <property type="match status" value="1"/>
</dbReference>
<dbReference type="PANTHER" id="PTHR33867:SF1">
    <property type="entry name" value="RIBOSOME MATURATION FACTOR RIMP"/>
    <property type="match status" value="1"/>
</dbReference>
<dbReference type="Pfam" id="PF17384">
    <property type="entry name" value="DUF150_C"/>
    <property type="match status" value="1"/>
</dbReference>
<dbReference type="Pfam" id="PF02576">
    <property type="entry name" value="RimP_N"/>
    <property type="match status" value="1"/>
</dbReference>
<dbReference type="SUPFAM" id="SSF74942">
    <property type="entry name" value="YhbC-like, C-terminal domain"/>
    <property type="match status" value="1"/>
</dbReference>
<dbReference type="SUPFAM" id="SSF75420">
    <property type="entry name" value="YhbC-like, N-terminal domain"/>
    <property type="match status" value="1"/>
</dbReference>
<evidence type="ECO:0000255" key="1">
    <source>
        <dbReference type="HAMAP-Rule" id="MF_01077"/>
    </source>
</evidence>
<protein>
    <recommendedName>
        <fullName evidence="1">Ribosome maturation factor RimP</fullName>
    </recommendedName>
</protein>
<comment type="function">
    <text evidence="1">Required for maturation of 30S ribosomal subunits.</text>
</comment>
<comment type="subcellular location">
    <subcellularLocation>
        <location evidence="1">Cytoplasm</location>
    </subcellularLocation>
</comment>
<comment type="similarity">
    <text evidence="1">Belongs to the RimP family.</text>
</comment>
<sequence length="151" mass="16665">MWGDRRISELVEPVVAALGYELVGVERLSSVGKGALLRIYIDTPSGITIDDCERASHQISALLDVEELMASAYTLEISSPGLNRPLFTEEHFKRFTGVEASITLSKPLNGRREFKGLLRGIRGDRVVILVAGEEFELPLEGIKKARLVPEC</sequence>
<proteinExistence type="inferred from homology"/>
<organism>
    <name type="scientific">Nitrosococcus oceani (strain ATCC 19707 / BCRC 17464 / JCM 30415 / NCIMB 11848 / C-107)</name>
    <dbReference type="NCBI Taxonomy" id="323261"/>
    <lineage>
        <taxon>Bacteria</taxon>
        <taxon>Pseudomonadati</taxon>
        <taxon>Pseudomonadota</taxon>
        <taxon>Gammaproteobacteria</taxon>
        <taxon>Chromatiales</taxon>
        <taxon>Chromatiaceae</taxon>
        <taxon>Nitrosococcus</taxon>
    </lineage>
</organism>
<keyword id="KW-0963">Cytoplasm</keyword>
<keyword id="KW-1185">Reference proteome</keyword>
<keyword id="KW-0690">Ribosome biogenesis</keyword>